<keyword id="KW-0150">Chloroplast</keyword>
<keyword id="KW-0456">Lyase</keyword>
<keyword id="KW-0460">Magnesium</keyword>
<keyword id="KW-0479">Metal-binding</keyword>
<keyword id="KW-0611">Plant defense</keyword>
<keyword id="KW-0934">Plastid</keyword>
<keyword id="KW-1185">Reference proteome</keyword>
<keyword id="KW-0809">Transit peptide</keyword>
<proteinExistence type="evidence at transcript level"/>
<evidence type="ECO:0000250" key="1">
    <source>
        <dbReference type="UniProtKB" id="A0A1C9J6A7"/>
    </source>
</evidence>
<evidence type="ECO:0000250" key="2">
    <source>
        <dbReference type="UniProtKB" id="Q40577"/>
    </source>
</evidence>
<evidence type="ECO:0000250" key="3">
    <source>
        <dbReference type="UniProtKB" id="Q84UV0"/>
    </source>
</evidence>
<evidence type="ECO:0000255" key="4"/>
<evidence type="ECO:0000256" key="5">
    <source>
        <dbReference type="SAM" id="MobiDB-lite"/>
    </source>
</evidence>
<evidence type="ECO:0000269" key="6">
    <source>
    </source>
</evidence>
<evidence type="ECO:0000303" key="7">
    <source>
    </source>
</evidence>
<evidence type="ECO:0000305" key="8"/>
<evidence type="ECO:0000312" key="9">
    <source>
        <dbReference type="EMBL" id="BAD07605.1"/>
    </source>
</evidence>
<evidence type="ECO:0000312" key="10">
    <source>
        <dbReference type="EMBL" id="BAF07634.1"/>
    </source>
</evidence>
<protein>
    <recommendedName>
        <fullName evidence="8">S-(+)-linalool synthase, chloroplastic</fullName>
        <shortName evidence="7">OsLIS</shortName>
        <ecNumber evidence="3">4.2.3.25</ecNumber>
    </recommendedName>
</protein>
<sequence length="595" mass="67266">MVCHVFSSFSSSLIRVLEAPLLLPAASASSSSSSSPASRSGGRRRRAAHVRPSPAIYPGRQELASHSSMLPTDFDIKVLIERHEALTDDVQEMLQHQRRRHQKTASGGRERIATVDHLRRLCMDHYFQDEVDDAMDACLLEELAHGGDLLDATLAFRLMREAGHHVSADEVLGRFTDDNGEFRLDYRKDIRGLLSLQDISHMNIGQEASLCKAKEFSTRNLESAINYLEPNLARYVRQSLDHPYHVSLNQYKARHHLSYLQTLPIRCTAMEELALADFQLNKLLHQMEMQEIKRWWMDLGLAQEIPVARDQVQKWFVWMMTAIQGASLSRCRIELTKIVSFVYIVDDIFDLVGTREELSCFTQAIRMWDLAAADSLPSCMRSCFRALHTVTNDIADMVEREHGVNPINHLKKAWAMLFDGFMTETKWLSAGQVPDSEEYLRNGVVTSGVPLVFVHLLFMLGHDVSQNAAEFVDHIPPVISCPAKILRLWDDLGSAKDEAQEGLDGSYKELYLKENPGLAAGEAEEHVRRLIAGEWEELNRECFSASPSRSSPATTFPAGFTQAALNAARMVGVMYGYDGERRLPVLDDYVRMLLF</sequence>
<name>LINS_ORYSJ</name>
<feature type="transit peptide" description="Chloroplast" evidence="4">
    <location>
        <begin position="1"/>
        <end position="46"/>
    </location>
</feature>
<feature type="chain" id="PRO_5004283133" description="S-(+)-linalool synthase, chloroplastic" evidence="4">
    <location>
        <begin position="47"/>
        <end position="595"/>
    </location>
</feature>
<feature type="region of interest" description="Disordered" evidence="5">
    <location>
        <begin position="27"/>
        <end position="54"/>
    </location>
</feature>
<feature type="short sequence motif" description="DDXXD motif" evidence="2">
    <location>
        <begin position="346"/>
        <end position="350"/>
    </location>
</feature>
<feature type="compositionally biased region" description="Low complexity" evidence="5">
    <location>
        <begin position="27"/>
        <end position="40"/>
    </location>
</feature>
<feature type="binding site" evidence="2">
    <location>
        <position position="309"/>
    </location>
    <ligand>
        <name>(2E)-geranyl diphosphate</name>
        <dbReference type="ChEBI" id="CHEBI:58057"/>
    </ligand>
</feature>
<feature type="binding site" evidence="2">
    <location>
        <position position="346"/>
    </location>
    <ligand>
        <name>(2E)-geranyl diphosphate</name>
        <dbReference type="ChEBI" id="CHEBI:58057"/>
    </ligand>
</feature>
<feature type="binding site" evidence="2">
    <location>
        <position position="346"/>
    </location>
    <ligand>
        <name>Mg(2+)</name>
        <dbReference type="ChEBI" id="CHEBI:18420"/>
        <label>1</label>
    </ligand>
</feature>
<feature type="binding site" evidence="2">
    <location>
        <position position="346"/>
    </location>
    <ligand>
        <name>Mg(2+)</name>
        <dbReference type="ChEBI" id="CHEBI:18420"/>
        <label>2</label>
    </ligand>
</feature>
<feature type="binding site" evidence="2">
    <location>
        <position position="350"/>
    </location>
    <ligand>
        <name>(2E)-geranyl diphosphate</name>
        <dbReference type="ChEBI" id="CHEBI:58057"/>
    </ligand>
</feature>
<feature type="binding site" evidence="2">
    <location>
        <position position="350"/>
    </location>
    <ligand>
        <name>Mg(2+)</name>
        <dbReference type="ChEBI" id="CHEBI:18420"/>
        <label>1</label>
    </ligand>
</feature>
<feature type="binding site" evidence="2">
    <location>
        <position position="350"/>
    </location>
    <ligand>
        <name>Mg(2+)</name>
        <dbReference type="ChEBI" id="CHEBI:18420"/>
        <label>2</label>
    </ligand>
</feature>
<feature type="binding site" evidence="2">
    <location>
        <position position="487"/>
    </location>
    <ligand>
        <name>(2E)-geranyl diphosphate</name>
        <dbReference type="ChEBI" id="CHEBI:58057"/>
    </ligand>
</feature>
<feature type="binding site" evidence="2">
    <location>
        <position position="490"/>
    </location>
    <ligand>
        <name>(2E)-geranyl diphosphate</name>
        <dbReference type="ChEBI" id="CHEBI:58057"/>
    </ligand>
</feature>
<feature type="binding site" evidence="2">
    <location>
        <position position="490"/>
    </location>
    <ligand>
        <name>Mg(2+)</name>
        <dbReference type="ChEBI" id="CHEBI:18420"/>
        <label>3</label>
    </ligand>
</feature>
<feature type="binding site" evidence="2">
    <location>
        <position position="494"/>
    </location>
    <ligand>
        <name>Mg(2+)</name>
        <dbReference type="ChEBI" id="CHEBI:18420"/>
        <label>3</label>
    </ligand>
</feature>
<feature type="binding site" evidence="2">
    <location>
        <position position="498"/>
    </location>
    <ligand>
        <name>Mg(2+)</name>
        <dbReference type="ChEBI" id="CHEBI:18420"/>
        <label>3</label>
    </ligand>
</feature>
<accession>Q6ZH94</accession>
<accession>A0A0N7KEL0</accession>
<organism>
    <name type="scientific">Oryza sativa subsp. japonica</name>
    <name type="common">Rice</name>
    <dbReference type="NCBI Taxonomy" id="39947"/>
    <lineage>
        <taxon>Eukaryota</taxon>
        <taxon>Viridiplantae</taxon>
        <taxon>Streptophyta</taxon>
        <taxon>Embryophyta</taxon>
        <taxon>Tracheophyta</taxon>
        <taxon>Spermatophyta</taxon>
        <taxon>Magnoliopsida</taxon>
        <taxon>Liliopsida</taxon>
        <taxon>Poales</taxon>
        <taxon>Poaceae</taxon>
        <taxon>BOP clade</taxon>
        <taxon>Oryzoideae</taxon>
        <taxon>Oryzeae</taxon>
        <taxon>Oryzinae</taxon>
        <taxon>Oryza</taxon>
        <taxon>Oryza sativa</taxon>
    </lineage>
</organism>
<comment type="function">
    <text evidence="6">Involved in monoterpene (C10) biosynthesis. The major product is S-(+)-linalool. Linalool production is induced by jasmonate in response to pathogen attack, it possesses antibacterial activity and is important for resistance to the bacterial blight pathogen Xanthomonas oryzae pv. oryzae (Xoo). Plants over-expressing linalool synthase display enhanced resistance to Xoo.</text>
</comment>
<comment type="catalytic activity">
    <reaction evidence="3">
        <text>(2E)-geranyl diphosphate + H2O = (S)-linalool + diphosphate</text>
        <dbReference type="Rhea" id="RHEA:24116"/>
        <dbReference type="ChEBI" id="CHEBI:98"/>
        <dbReference type="ChEBI" id="CHEBI:15377"/>
        <dbReference type="ChEBI" id="CHEBI:33019"/>
        <dbReference type="ChEBI" id="CHEBI:58057"/>
        <dbReference type="EC" id="4.2.3.25"/>
    </reaction>
</comment>
<comment type="cofactor">
    <cofactor evidence="1">
        <name>Mg(2+)</name>
        <dbReference type="ChEBI" id="CHEBI:18420"/>
    </cofactor>
    <cofactor evidence="1">
        <name>Mn(2+)</name>
        <dbReference type="ChEBI" id="CHEBI:29035"/>
    </cofactor>
    <text evidence="1">Binds 3 Mg(2+) or Mn(2+) ions per subunit.</text>
</comment>
<comment type="pathway">
    <text evidence="8">Secondary metabolite biosynthesis; terpenoid biosynthesis.</text>
</comment>
<comment type="subcellular location">
    <subcellularLocation>
        <location evidence="6">Plastid</location>
        <location evidence="6">Chloroplast</location>
    </subcellularLocation>
</comment>
<comment type="induction">
    <text evidence="6">By jasmonate.</text>
</comment>
<comment type="domain">
    <text evidence="2">The Asp-Asp-Xaa-Xaa-Asp/Glu (DDXXD/E) motif is important for the catalytic activity, presumably through binding to Mg(2+).</text>
</comment>
<comment type="similarity">
    <text evidence="8">Belongs to the terpene synthase family. Tpsb subfamily.</text>
</comment>
<gene>
    <name evidence="7" type="primary">LIS</name>
    <name evidence="10" type="ordered locus">Os02g0121700</name>
    <name evidence="9" type="ORF">OJ1020_C02.21</name>
</gene>
<reference key="1">
    <citation type="submission" date="2008-03" db="EMBL/GenBank/DDBJ databases">
        <title>Molecular and genomic basis of volatile-mediated indirect defense against insects in rice.</title>
        <authorList>
            <person name="Yuan J.S."/>
            <person name="Kollner T.G."/>
            <person name="Wiggins G."/>
            <person name="Grant J."/>
            <person name="Degenhardt J."/>
            <person name="Chen F."/>
        </authorList>
    </citation>
    <scope>NUCLEOTIDE SEQUENCE [MRNA]</scope>
</reference>
<reference key="2">
    <citation type="journal article" date="2005" name="Nature">
        <title>The map-based sequence of the rice genome.</title>
        <authorList>
            <consortium name="International rice genome sequencing project (IRGSP)"/>
        </authorList>
    </citation>
    <scope>NUCLEOTIDE SEQUENCE [LARGE SCALE GENOMIC DNA]</scope>
    <source>
        <strain>cv. Nipponbare</strain>
    </source>
</reference>
<reference key="3">
    <citation type="journal article" date="2008" name="Nucleic Acids Res.">
        <title>The rice annotation project database (RAP-DB): 2008 update.</title>
        <authorList>
            <consortium name="The rice annotation project (RAP)"/>
        </authorList>
    </citation>
    <scope>GENOME REANNOTATION</scope>
    <source>
        <strain>cv. Nipponbare</strain>
    </source>
</reference>
<reference key="4">
    <citation type="journal article" date="2013" name="Rice">
        <title>Improvement of the Oryza sativa Nipponbare reference genome using next generation sequence and optical map data.</title>
        <authorList>
            <person name="Kawahara Y."/>
            <person name="de la Bastide M."/>
            <person name="Hamilton J.P."/>
            <person name="Kanamori H."/>
            <person name="McCombie W.R."/>
            <person name="Ouyang S."/>
            <person name="Schwartz D.C."/>
            <person name="Tanaka T."/>
            <person name="Wu J."/>
            <person name="Zhou S."/>
            <person name="Childs K.L."/>
            <person name="Davidson R.M."/>
            <person name="Lin H."/>
            <person name="Quesada-Ocampo L."/>
            <person name="Vaillancourt B."/>
            <person name="Sakai H."/>
            <person name="Lee S.S."/>
            <person name="Kim J."/>
            <person name="Numa H."/>
            <person name="Itoh T."/>
            <person name="Buell C.R."/>
            <person name="Matsumoto T."/>
        </authorList>
    </citation>
    <scope>GENOME REANNOTATION</scope>
    <source>
        <strain>cv. Nipponbare</strain>
    </source>
</reference>
<reference key="5">
    <citation type="journal article" date="2003" name="Science">
        <title>Collection, mapping, and annotation of over 28,000 cDNA clones from japonica rice.</title>
        <authorList>
            <consortium name="The rice full-length cDNA consortium"/>
        </authorList>
    </citation>
    <scope>NUCLEOTIDE SEQUENCE [LARGE SCALE MRNA]</scope>
    <source>
        <strain>cv. Nipponbare</strain>
    </source>
</reference>
<reference key="6">
    <citation type="journal article" date="2014" name="Plant Cell Environ.">
        <title>Jasmonate induction of the monoterpene linalool confers resistance to rice bacterial blight and its biosynthesis is regulated by JAZ protein in rice.</title>
        <authorList>
            <person name="Taniguchi S."/>
            <person name="Hosokawa-Shinonaga Y."/>
            <person name="Tamaoki D."/>
            <person name="Yamada S."/>
            <person name="Akimitsu K."/>
            <person name="Gomi K."/>
        </authorList>
    </citation>
    <scope>FUNCTION</scope>
    <scope>SUBCELLULAR LOCATION</scope>
    <scope>INDUCTION BY JASMONATE</scope>
</reference>
<dbReference type="EC" id="4.2.3.25" evidence="3"/>
<dbReference type="EMBL" id="EU596453">
    <property type="protein sequence ID" value="ACF05530.1"/>
    <property type="molecule type" value="mRNA"/>
</dbReference>
<dbReference type="EMBL" id="AP004078">
    <property type="protein sequence ID" value="BAD07605.1"/>
    <property type="molecule type" value="Genomic_DNA"/>
</dbReference>
<dbReference type="EMBL" id="AP008208">
    <property type="protein sequence ID" value="BAF07634.1"/>
    <property type="molecule type" value="Genomic_DNA"/>
</dbReference>
<dbReference type="EMBL" id="AP014958">
    <property type="protein sequence ID" value="BAS76713.1"/>
    <property type="molecule type" value="Genomic_DNA"/>
</dbReference>
<dbReference type="EMBL" id="AK110925">
    <property type="protein sequence ID" value="BAG99084.1"/>
    <property type="molecule type" value="mRNA"/>
</dbReference>
<dbReference type="RefSeq" id="XP_015623808.1">
    <property type="nucleotide sequence ID" value="XM_015768322.1"/>
</dbReference>
<dbReference type="SMR" id="Q6ZH94"/>
<dbReference type="FunCoup" id="Q6ZH94">
    <property type="interactions" value="1132"/>
</dbReference>
<dbReference type="STRING" id="39947.Q6ZH94"/>
<dbReference type="PaxDb" id="39947-Q6ZH94"/>
<dbReference type="EnsemblPlants" id="Os02t0121700-01">
    <property type="protein sequence ID" value="Os02t0121700-01"/>
    <property type="gene ID" value="Os02g0121700"/>
</dbReference>
<dbReference type="Gramene" id="Os02t0121700-01">
    <property type="protein sequence ID" value="Os02t0121700-01"/>
    <property type="gene ID" value="Os02g0121700"/>
</dbReference>
<dbReference type="KEGG" id="dosa:Os02g0121700"/>
<dbReference type="eggNOG" id="ENOG502QTGK">
    <property type="taxonomic scope" value="Eukaryota"/>
</dbReference>
<dbReference type="HOGENOM" id="CLU_003125_7_1_1"/>
<dbReference type="InParanoid" id="Q6ZH94"/>
<dbReference type="OMA" id="MMTAIQG"/>
<dbReference type="OrthoDB" id="672026at2759"/>
<dbReference type="UniPathway" id="UPA00213"/>
<dbReference type="Proteomes" id="UP000000763">
    <property type="component" value="Chromosome 2"/>
</dbReference>
<dbReference type="Proteomes" id="UP000059680">
    <property type="component" value="Chromosome 2"/>
</dbReference>
<dbReference type="GO" id="GO:0009507">
    <property type="term" value="C:chloroplast"/>
    <property type="evidence" value="ECO:0007669"/>
    <property type="project" value="UniProtKB-SubCell"/>
</dbReference>
<dbReference type="GO" id="GO:0000287">
    <property type="term" value="F:magnesium ion binding"/>
    <property type="evidence" value="ECO:0007669"/>
    <property type="project" value="InterPro"/>
</dbReference>
<dbReference type="GO" id="GO:0034007">
    <property type="term" value="F:S-linalool synthase activity"/>
    <property type="evidence" value="ECO:0000314"/>
    <property type="project" value="UniProtKB"/>
</dbReference>
<dbReference type="GO" id="GO:0010333">
    <property type="term" value="F:terpene synthase activity"/>
    <property type="evidence" value="ECO:0007669"/>
    <property type="project" value="InterPro"/>
</dbReference>
<dbReference type="GO" id="GO:0042742">
    <property type="term" value="P:defense response to bacterium"/>
    <property type="evidence" value="ECO:0000315"/>
    <property type="project" value="UniProtKB"/>
</dbReference>
<dbReference type="GO" id="GO:0043693">
    <property type="term" value="P:monoterpene biosynthetic process"/>
    <property type="evidence" value="ECO:0000314"/>
    <property type="project" value="UniProtKB"/>
</dbReference>
<dbReference type="GO" id="GO:0016114">
    <property type="term" value="P:terpenoid biosynthetic process"/>
    <property type="evidence" value="ECO:0007669"/>
    <property type="project" value="UniProtKB-UniPathway"/>
</dbReference>
<dbReference type="FunFam" id="1.10.600.10:FF:000042">
    <property type="entry name" value="Probable terpene synthase 3, chloroplastic"/>
    <property type="match status" value="1"/>
</dbReference>
<dbReference type="FunFam" id="1.50.10.130:FF:000005">
    <property type="entry name" value="S-(+)-linalool synthase, chloroplastic"/>
    <property type="match status" value="1"/>
</dbReference>
<dbReference type="Gene3D" id="1.10.600.10">
    <property type="entry name" value="Farnesyl Diphosphate Synthase"/>
    <property type="match status" value="1"/>
</dbReference>
<dbReference type="Gene3D" id="1.50.10.130">
    <property type="entry name" value="Terpene synthase, N-terminal domain"/>
    <property type="match status" value="1"/>
</dbReference>
<dbReference type="InterPro" id="IPR008949">
    <property type="entry name" value="Isoprenoid_synthase_dom_sf"/>
</dbReference>
<dbReference type="InterPro" id="IPR034741">
    <property type="entry name" value="Terpene_cyclase-like_1_C"/>
</dbReference>
<dbReference type="InterPro" id="IPR001906">
    <property type="entry name" value="Terpene_synth_N"/>
</dbReference>
<dbReference type="InterPro" id="IPR036965">
    <property type="entry name" value="Terpene_synth_N_sf"/>
</dbReference>
<dbReference type="InterPro" id="IPR050148">
    <property type="entry name" value="Terpene_synthase-like"/>
</dbReference>
<dbReference type="InterPro" id="IPR005630">
    <property type="entry name" value="Terpene_synthase_metal-bd"/>
</dbReference>
<dbReference type="InterPro" id="IPR008930">
    <property type="entry name" value="Terpenoid_cyclase/PrenylTrfase"/>
</dbReference>
<dbReference type="PANTHER" id="PTHR31225">
    <property type="entry name" value="OS04G0344100 PROTEIN-RELATED"/>
    <property type="match status" value="1"/>
</dbReference>
<dbReference type="PANTHER" id="PTHR31225:SF0">
    <property type="entry name" value="S-(+)-LINALOOL SYNTHASE, CHLOROPLASTIC"/>
    <property type="match status" value="1"/>
</dbReference>
<dbReference type="Pfam" id="PF01397">
    <property type="entry name" value="Terpene_synth"/>
    <property type="match status" value="1"/>
</dbReference>
<dbReference type="Pfam" id="PF03936">
    <property type="entry name" value="Terpene_synth_C"/>
    <property type="match status" value="1"/>
</dbReference>
<dbReference type="SFLD" id="SFLDS00005">
    <property type="entry name" value="Isoprenoid_Synthase_Type_I"/>
    <property type="match status" value="1"/>
</dbReference>
<dbReference type="SFLD" id="SFLDG01019">
    <property type="entry name" value="Terpene_Cyclase_Like_1_C_Termi"/>
    <property type="match status" value="1"/>
</dbReference>
<dbReference type="SUPFAM" id="SSF48239">
    <property type="entry name" value="Terpenoid cyclases/Protein prenyltransferases"/>
    <property type="match status" value="1"/>
</dbReference>
<dbReference type="SUPFAM" id="SSF48576">
    <property type="entry name" value="Terpenoid synthases"/>
    <property type="match status" value="1"/>
</dbReference>